<organism>
    <name type="scientific">Danio rerio</name>
    <name type="common">Zebrafish</name>
    <name type="synonym">Brachydanio rerio</name>
    <dbReference type="NCBI Taxonomy" id="7955"/>
    <lineage>
        <taxon>Eukaryota</taxon>
        <taxon>Metazoa</taxon>
        <taxon>Chordata</taxon>
        <taxon>Craniata</taxon>
        <taxon>Vertebrata</taxon>
        <taxon>Euteleostomi</taxon>
        <taxon>Actinopterygii</taxon>
        <taxon>Neopterygii</taxon>
        <taxon>Teleostei</taxon>
        <taxon>Ostariophysi</taxon>
        <taxon>Cypriniformes</taxon>
        <taxon>Danionidae</taxon>
        <taxon>Danioninae</taxon>
        <taxon>Danio</taxon>
    </lineage>
</organism>
<reference key="1">
    <citation type="journal article" date="1992" name="Development">
        <title>Coordinate embryonic expression of three zebrafish engrailed genes.</title>
        <authorList>
            <person name="Ekker M."/>
            <person name="Wegner J."/>
            <person name="Akimenko M.-A."/>
            <person name="Westerfield M."/>
        </authorList>
    </citation>
    <scope>NUCLEOTIDE SEQUENCE [MRNA]</scope>
</reference>
<keyword id="KW-0217">Developmental protein</keyword>
<keyword id="KW-0238">DNA-binding</keyword>
<keyword id="KW-0371">Homeobox</keyword>
<keyword id="KW-0539">Nucleus</keyword>
<keyword id="KW-1185">Reference proteome</keyword>
<sequence length="231" mass="26200">MEDQRRGQGEEEDDSGSLPSPPLLPAHRNTDFFIDNILRPDFGCKRERERVTRDSGVRPTALPDSRSDGVSSSASSTVSSPVSSRQSNKVEQGSSKSSSPSKDSQKQILWPAWVYCTRYSDRPSSGPRTRKLKKKNNNTESDDKRPRTAFTAEQLQRLKAEFQTSRYITEQRRQALARELGLNESQIKIWFQNKRAKIKKSSGFKNALAMQLMAQGLYNHSTTTIQEEEDN</sequence>
<accession>Q04896</accession>
<evidence type="ECO:0000255" key="1">
    <source>
        <dbReference type="PROSITE-ProRule" id="PRU00108"/>
    </source>
</evidence>
<evidence type="ECO:0000256" key="2">
    <source>
        <dbReference type="SAM" id="MobiDB-lite"/>
    </source>
</evidence>
<evidence type="ECO:0000305" key="3"/>
<name>HME1A_DANRE</name>
<feature type="chain" id="PRO_0000196072" description="Homeobox protein engrailed-1a">
    <location>
        <begin position="1"/>
        <end position="231"/>
    </location>
</feature>
<feature type="DNA-binding region" description="Homeobox" evidence="1">
    <location>
        <begin position="143"/>
        <end position="202"/>
    </location>
</feature>
<feature type="region of interest" description="Disordered" evidence="2">
    <location>
        <begin position="1"/>
        <end position="29"/>
    </location>
</feature>
<feature type="region of interest" description="Disordered" evidence="2">
    <location>
        <begin position="43"/>
        <end position="105"/>
    </location>
</feature>
<feature type="region of interest" description="Disordered" evidence="2">
    <location>
        <begin position="121"/>
        <end position="148"/>
    </location>
</feature>
<feature type="compositionally biased region" description="Basic and acidic residues" evidence="2">
    <location>
        <begin position="43"/>
        <end position="56"/>
    </location>
</feature>
<feature type="compositionally biased region" description="Low complexity" evidence="2">
    <location>
        <begin position="68"/>
        <end position="102"/>
    </location>
</feature>
<dbReference type="EMBL" id="X68445">
    <property type="protein sequence ID" value="CAA48490.1"/>
    <property type="molecule type" value="mRNA"/>
</dbReference>
<dbReference type="PIR" id="S30438">
    <property type="entry name" value="S30438"/>
</dbReference>
<dbReference type="RefSeq" id="NP_571120.1">
    <property type="nucleotide sequence ID" value="NM_131045.1"/>
</dbReference>
<dbReference type="SMR" id="Q04896"/>
<dbReference type="STRING" id="7955.ENSDARP00000023487"/>
<dbReference type="PaxDb" id="7955-ENSDARP00000023487"/>
<dbReference type="GeneID" id="30244"/>
<dbReference type="KEGG" id="dre:30244"/>
<dbReference type="AGR" id="ZFIN:ZDB-GENE-980526-216"/>
<dbReference type="CTD" id="30244"/>
<dbReference type="ZFIN" id="ZDB-GENE-980526-216">
    <property type="gene designation" value="en1a"/>
</dbReference>
<dbReference type="eggNOG" id="KOG0493">
    <property type="taxonomic scope" value="Eukaryota"/>
</dbReference>
<dbReference type="InParanoid" id="Q04896"/>
<dbReference type="OrthoDB" id="6159439at2759"/>
<dbReference type="PRO" id="PR:Q04896"/>
<dbReference type="Proteomes" id="UP000000437">
    <property type="component" value="Chromosome 9"/>
</dbReference>
<dbReference type="GO" id="GO:0005634">
    <property type="term" value="C:nucleus"/>
    <property type="evidence" value="ECO:0000318"/>
    <property type="project" value="GO_Central"/>
</dbReference>
<dbReference type="GO" id="GO:0000981">
    <property type="term" value="F:DNA-binding transcription factor activity, RNA polymerase II-specific"/>
    <property type="evidence" value="ECO:0000318"/>
    <property type="project" value="GO_Central"/>
</dbReference>
<dbReference type="GO" id="GO:0000978">
    <property type="term" value="F:RNA polymerase II cis-regulatory region sequence-specific DNA binding"/>
    <property type="evidence" value="ECO:0000318"/>
    <property type="project" value="GO_Central"/>
</dbReference>
<dbReference type="GO" id="GO:0060385">
    <property type="term" value="P:axonogenesis involved in innervation"/>
    <property type="evidence" value="ECO:0000316"/>
    <property type="project" value="ZFIN"/>
</dbReference>
<dbReference type="GO" id="GO:0006357">
    <property type="term" value="P:regulation of transcription by RNA polymerase II"/>
    <property type="evidence" value="ECO:0000318"/>
    <property type="project" value="GO_Central"/>
</dbReference>
<dbReference type="CDD" id="cd00086">
    <property type="entry name" value="homeodomain"/>
    <property type="match status" value="1"/>
</dbReference>
<dbReference type="FunFam" id="1.10.10.60:FF:000189">
    <property type="entry name" value="Homeobox protein engrailed-like"/>
    <property type="match status" value="1"/>
</dbReference>
<dbReference type="Gene3D" id="1.10.10.60">
    <property type="entry name" value="Homeodomain-like"/>
    <property type="match status" value="1"/>
</dbReference>
<dbReference type="InterPro" id="IPR050720">
    <property type="entry name" value="Engrailed_Homeobox_TFs"/>
</dbReference>
<dbReference type="InterPro" id="IPR001356">
    <property type="entry name" value="HD"/>
</dbReference>
<dbReference type="InterPro" id="IPR000747">
    <property type="entry name" value="HD_engrailed"/>
</dbReference>
<dbReference type="InterPro" id="IPR020479">
    <property type="entry name" value="HD_metazoa"/>
</dbReference>
<dbReference type="InterPro" id="IPR019549">
    <property type="entry name" value="Homeobox-engrailed_C-terminal"/>
</dbReference>
<dbReference type="InterPro" id="IPR019737">
    <property type="entry name" value="Homeobox-engrailed_CS"/>
</dbReference>
<dbReference type="InterPro" id="IPR017970">
    <property type="entry name" value="Homeobox_CS"/>
</dbReference>
<dbReference type="InterPro" id="IPR009057">
    <property type="entry name" value="Homeodomain-like_sf"/>
</dbReference>
<dbReference type="InterPro" id="IPR000047">
    <property type="entry name" value="HTH_motif"/>
</dbReference>
<dbReference type="PANTHER" id="PTHR24341">
    <property type="entry name" value="HOMEOBOX PROTEIN ENGRAILED"/>
    <property type="match status" value="1"/>
</dbReference>
<dbReference type="PANTHER" id="PTHR24341:SF4">
    <property type="entry name" value="HOMEOBOX PROTEIN ENGRAILED-1"/>
    <property type="match status" value="1"/>
</dbReference>
<dbReference type="Pfam" id="PF10525">
    <property type="entry name" value="Engrail_1_C_sig"/>
    <property type="match status" value="1"/>
</dbReference>
<dbReference type="Pfam" id="PF00046">
    <property type="entry name" value="Homeodomain"/>
    <property type="match status" value="1"/>
</dbReference>
<dbReference type="PRINTS" id="PR00026">
    <property type="entry name" value="ENGRAILED"/>
</dbReference>
<dbReference type="PRINTS" id="PR00024">
    <property type="entry name" value="HOMEOBOX"/>
</dbReference>
<dbReference type="PRINTS" id="PR00031">
    <property type="entry name" value="HTHREPRESSR"/>
</dbReference>
<dbReference type="SMART" id="SM00389">
    <property type="entry name" value="HOX"/>
    <property type="match status" value="1"/>
</dbReference>
<dbReference type="SUPFAM" id="SSF46689">
    <property type="entry name" value="Homeodomain-like"/>
    <property type="match status" value="1"/>
</dbReference>
<dbReference type="PROSITE" id="PS00033">
    <property type="entry name" value="ENGRAILED"/>
    <property type="match status" value="1"/>
</dbReference>
<dbReference type="PROSITE" id="PS00027">
    <property type="entry name" value="HOMEOBOX_1"/>
    <property type="match status" value="1"/>
</dbReference>
<dbReference type="PROSITE" id="PS50071">
    <property type="entry name" value="HOMEOBOX_2"/>
    <property type="match status" value="1"/>
</dbReference>
<proteinExistence type="evidence at transcript level"/>
<comment type="subcellular location">
    <subcellularLocation>
        <location>Nucleus</location>
    </subcellularLocation>
</comment>
<comment type="similarity">
    <text evidence="3">Belongs to the engrailed homeobox family.</text>
</comment>
<protein>
    <recommendedName>
        <fullName>Homeobox protein engrailed-1a</fullName>
        <shortName>Homeobox protein en-1a</shortName>
    </recommendedName>
</protein>
<gene>
    <name type="primary">eng1a</name>
    <name type="synonym">eng-1</name>
    <name type="synonym">eng1</name>
</gene>